<sequence>MKLHHCLSFLLVVTLVPAALSLEDVAPLGANQSSYNASFLPSFELSAGSYSGDDVIIVKEGTNVSLECLLTVDQYGEVHWYNSKGQQLHSRGGKWLVSDNFLNITSVAFDDRGLYTCIITSPARASYSVTLRVIFTSGDMSVYYMVVCLIAFTITLILNVTRLCLMSTHLRKTEKAINEFFRTEGAEKLQKAFEIAKRIPIITSAKTLELAKVTQFKTMEFARYIEELARSVPLPPLILNCRAFVEEMFEAVRVDDPDDMGERIKERPALDAQSGIYVINPELGRSNSPGGDSDDGSLSEQGQEIAVQVSVHLQSETKSIGTDSQDSSHFSPPSDPASAEGSIHHRVSI</sequence>
<name>MFAP3_MOUSE</name>
<evidence type="ECO:0000250" key="1"/>
<evidence type="ECO:0000255" key="2"/>
<evidence type="ECO:0000255" key="3">
    <source>
        <dbReference type="PROSITE-ProRule" id="PRU00114"/>
    </source>
</evidence>
<evidence type="ECO:0000256" key="4">
    <source>
        <dbReference type="SAM" id="MobiDB-lite"/>
    </source>
</evidence>
<evidence type="ECO:0000305" key="5"/>
<accession>Q922T2</accession>
<accession>Q8BHK5</accession>
<organism>
    <name type="scientific">Mus musculus</name>
    <name type="common">Mouse</name>
    <dbReference type="NCBI Taxonomy" id="10090"/>
    <lineage>
        <taxon>Eukaryota</taxon>
        <taxon>Metazoa</taxon>
        <taxon>Chordata</taxon>
        <taxon>Craniata</taxon>
        <taxon>Vertebrata</taxon>
        <taxon>Euteleostomi</taxon>
        <taxon>Mammalia</taxon>
        <taxon>Eutheria</taxon>
        <taxon>Euarchontoglires</taxon>
        <taxon>Glires</taxon>
        <taxon>Rodentia</taxon>
        <taxon>Myomorpha</taxon>
        <taxon>Muroidea</taxon>
        <taxon>Muridae</taxon>
        <taxon>Murinae</taxon>
        <taxon>Mus</taxon>
        <taxon>Mus</taxon>
    </lineage>
</organism>
<dbReference type="EMBL" id="AK042988">
    <property type="protein sequence ID" value="BAC31429.1"/>
    <property type="molecule type" value="mRNA"/>
</dbReference>
<dbReference type="EMBL" id="AK076071">
    <property type="protein sequence ID" value="BAC36162.1"/>
    <property type="molecule type" value="mRNA"/>
</dbReference>
<dbReference type="EMBL" id="BC006828">
    <property type="protein sequence ID" value="AAH06828.1"/>
    <property type="molecule type" value="mRNA"/>
</dbReference>
<dbReference type="CCDS" id="CCDS24718.1"/>
<dbReference type="RefSeq" id="NP_663401.2">
    <property type="nucleotide sequence ID" value="NM_145426.2"/>
</dbReference>
<dbReference type="RefSeq" id="NP_850930.1">
    <property type="nucleotide sequence ID" value="NM_180599.1"/>
</dbReference>
<dbReference type="RefSeq" id="XP_006532913.1">
    <property type="nucleotide sequence ID" value="XM_006532850.2"/>
</dbReference>
<dbReference type="FunCoup" id="Q922T2">
    <property type="interactions" value="1333"/>
</dbReference>
<dbReference type="STRING" id="10090.ENSMUSP00000020830"/>
<dbReference type="GlyCosmos" id="Q922T2">
    <property type="glycosylation" value="4 sites, No reported glycans"/>
</dbReference>
<dbReference type="GlyGen" id="Q922T2">
    <property type="glycosylation" value="4 sites"/>
</dbReference>
<dbReference type="iPTMnet" id="Q922T2"/>
<dbReference type="PhosphoSitePlus" id="Q922T2"/>
<dbReference type="SwissPalm" id="Q922T2"/>
<dbReference type="jPOST" id="Q922T2"/>
<dbReference type="PaxDb" id="10090-ENSMUSP00000020830"/>
<dbReference type="ProteomicsDB" id="252542"/>
<dbReference type="DNASU" id="216760"/>
<dbReference type="GeneID" id="216760"/>
<dbReference type="KEGG" id="mmu:216760"/>
<dbReference type="UCSC" id="uc007izx.1">
    <property type="organism name" value="mouse"/>
</dbReference>
<dbReference type="AGR" id="MGI:1924068"/>
<dbReference type="CTD" id="4238"/>
<dbReference type="MGI" id="MGI:1924068">
    <property type="gene designation" value="Mfap3"/>
</dbReference>
<dbReference type="eggNOG" id="ENOG502QW9J">
    <property type="taxonomic scope" value="Eukaryota"/>
</dbReference>
<dbReference type="InParanoid" id="Q922T2"/>
<dbReference type="OrthoDB" id="8611351at2759"/>
<dbReference type="PhylomeDB" id="Q922T2"/>
<dbReference type="TreeFam" id="TF333205"/>
<dbReference type="BioGRID-ORCS" id="216760">
    <property type="hits" value="1 hit in 77 CRISPR screens"/>
</dbReference>
<dbReference type="ChiTaRS" id="Mfap3">
    <property type="organism name" value="mouse"/>
</dbReference>
<dbReference type="PRO" id="PR:Q922T2"/>
<dbReference type="Proteomes" id="UP000000589">
    <property type="component" value="Unplaced"/>
</dbReference>
<dbReference type="RNAct" id="Q922T2">
    <property type="molecule type" value="protein"/>
</dbReference>
<dbReference type="GO" id="GO:0005886">
    <property type="term" value="C:plasma membrane"/>
    <property type="evidence" value="ECO:0007669"/>
    <property type="project" value="UniProtKB-SubCell"/>
</dbReference>
<dbReference type="Gene3D" id="2.60.40.10">
    <property type="entry name" value="Immunoglobulins"/>
    <property type="match status" value="1"/>
</dbReference>
<dbReference type="InterPro" id="IPR007110">
    <property type="entry name" value="Ig-like_dom"/>
</dbReference>
<dbReference type="InterPro" id="IPR036179">
    <property type="entry name" value="Ig-like_dom_sf"/>
</dbReference>
<dbReference type="InterPro" id="IPR013783">
    <property type="entry name" value="Ig-like_fold"/>
</dbReference>
<dbReference type="InterPro" id="IPR003599">
    <property type="entry name" value="Ig_sub"/>
</dbReference>
<dbReference type="InterPro" id="IPR003598">
    <property type="entry name" value="Ig_sub2"/>
</dbReference>
<dbReference type="PANTHER" id="PTHR14340">
    <property type="entry name" value="MICROFIBRIL-ASSOCIATED GLYCOPROTEIN 3"/>
    <property type="match status" value="1"/>
</dbReference>
<dbReference type="PANTHER" id="PTHR14340:SF4">
    <property type="entry name" value="MICROFIBRIL-ASSOCIATED GLYCOPROTEIN 3"/>
    <property type="match status" value="1"/>
</dbReference>
<dbReference type="Pfam" id="PF13927">
    <property type="entry name" value="Ig_3"/>
    <property type="match status" value="1"/>
</dbReference>
<dbReference type="SMART" id="SM00409">
    <property type="entry name" value="IG"/>
    <property type="match status" value="1"/>
</dbReference>
<dbReference type="SMART" id="SM00408">
    <property type="entry name" value="IGc2"/>
    <property type="match status" value="1"/>
</dbReference>
<dbReference type="SUPFAM" id="SSF48726">
    <property type="entry name" value="Immunoglobulin"/>
    <property type="match status" value="1"/>
</dbReference>
<dbReference type="PROSITE" id="PS50835">
    <property type="entry name" value="IG_LIKE"/>
    <property type="match status" value="1"/>
</dbReference>
<proteinExistence type="evidence at transcript level"/>
<reference key="1">
    <citation type="journal article" date="2005" name="Science">
        <title>The transcriptional landscape of the mammalian genome.</title>
        <authorList>
            <person name="Carninci P."/>
            <person name="Kasukawa T."/>
            <person name="Katayama S."/>
            <person name="Gough J."/>
            <person name="Frith M.C."/>
            <person name="Maeda N."/>
            <person name="Oyama R."/>
            <person name="Ravasi T."/>
            <person name="Lenhard B."/>
            <person name="Wells C."/>
            <person name="Kodzius R."/>
            <person name="Shimokawa K."/>
            <person name="Bajic V.B."/>
            <person name="Brenner S.E."/>
            <person name="Batalov S."/>
            <person name="Forrest A.R."/>
            <person name="Zavolan M."/>
            <person name="Davis M.J."/>
            <person name="Wilming L.G."/>
            <person name="Aidinis V."/>
            <person name="Allen J.E."/>
            <person name="Ambesi-Impiombato A."/>
            <person name="Apweiler R."/>
            <person name="Aturaliya R.N."/>
            <person name="Bailey T.L."/>
            <person name="Bansal M."/>
            <person name="Baxter L."/>
            <person name="Beisel K.W."/>
            <person name="Bersano T."/>
            <person name="Bono H."/>
            <person name="Chalk A.M."/>
            <person name="Chiu K.P."/>
            <person name="Choudhary V."/>
            <person name="Christoffels A."/>
            <person name="Clutterbuck D.R."/>
            <person name="Crowe M.L."/>
            <person name="Dalla E."/>
            <person name="Dalrymple B.P."/>
            <person name="de Bono B."/>
            <person name="Della Gatta G."/>
            <person name="di Bernardo D."/>
            <person name="Down T."/>
            <person name="Engstrom P."/>
            <person name="Fagiolini M."/>
            <person name="Faulkner G."/>
            <person name="Fletcher C.F."/>
            <person name="Fukushima T."/>
            <person name="Furuno M."/>
            <person name="Futaki S."/>
            <person name="Gariboldi M."/>
            <person name="Georgii-Hemming P."/>
            <person name="Gingeras T.R."/>
            <person name="Gojobori T."/>
            <person name="Green R.E."/>
            <person name="Gustincich S."/>
            <person name="Harbers M."/>
            <person name="Hayashi Y."/>
            <person name="Hensch T.K."/>
            <person name="Hirokawa N."/>
            <person name="Hill D."/>
            <person name="Huminiecki L."/>
            <person name="Iacono M."/>
            <person name="Ikeo K."/>
            <person name="Iwama A."/>
            <person name="Ishikawa T."/>
            <person name="Jakt M."/>
            <person name="Kanapin A."/>
            <person name="Katoh M."/>
            <person name="Kawasawa Y."/>
            <person name="Kelso J."/>
            <person name="Kitamura H."/>
            <person name="Kitano H."/>
            <person name="Kollias G."/>
            <person name="Krishnan S.P."/>
            <person name="Kruger A."/>
            <person name="Kummerfeld S.K."/>
            <person name="Kurochkin I.V."/>
            <person name="Lareau L.F."/>
            <person name="Lazarevic D."/>
            <person name="Lipovich L."/>
            <person name="Liu J."/>
            <person name="Liuni S."/>
            <person name="McWilliam S."/>
            <person name="Madan Babu M."/>
            <person name="Madera M."/>
            <person name="Marchionni L."/>
            <person name="Matsuda H."/>
            <person name="Matsuzawa S."/>
            <person name="Miki H."/>
            <person name="Mignone F."/>
            <person name="Miyake S."/>
            <person name="Morris K."/>
            <person name="Mottagui-Tabar S."/>
            <person name="Mulder N."/>
            <person name="Nakano N."/>
            <person name="Nakauchi H."/>
            <person name="Ng P."/>
            <person name="Nilsson R."/>
            <person name="Nishiguchi S."/>
            <person name="Nishikawa S."/>
            <person name="Nori F."/>
            <person name="Ohara O."/>
            <person name="Okazaki Y."/>
            <person name="Orlando V."/>
            <person name="Pang K.C."/>
            <person name="Pavan W.J."/>
            <person name="Pavesi G."/>
            <person name="Pesole G."/>
            <person name="Petrovsky N."/>
            <person name="Piazza S."/>
            <person name="Reed J."/>
            <person name="Reid J.F."/>
            <person name="Ring B.Z."/>
            <person name="Ringwald M."/>
            <person name="Rost B."/>
            <person name="Ruan Y."/>
            <person name="Salzberg S.L."/>
            <person name="Sandelin A."/>
            <person name="Schneider C."/>
            <person name="Schoenbach C."/>
            <person name="Sekiguchi K."/>
            <person name="Semple C.A."/>
            <person name="Seno S."/>
            <person name="Sessa L."/>
            <person name="Sheng Y."/>
            <person name="Shibata Y."/>
            <person name="Shimada H."/>
            <person name="Shimada K."/>
            <person name="Silva D."/>
            <person name="Sinclair B."/>
            <person name="Sperling S."/>
            <person name="Stupka E."/>
            <person name="Sugiura K."/>
            <person name="Sultana R."/>
            <person name="Takenaka Y."/>
            <person name="Taki K."/>
            <person name="Tammoja K."/>
            <person name="Tan S.L."/>
            <person name="Tang S."/>
            <person name="Taylor M.S."/>
            <person name="Tegner J."/>
            <person name="Teichmann S.A."/>
            <person name="Ueda H.R."/>
            <person name="van Nimwegen E."/>
            <person name="Verardo R."/>
            <person name="Wei C.L."/>
            <person name="Yagi K."/>
            <person name="Yamanishi H."/>
            <person name="Zabarovsky E."/>
            <person name="Zhu S."/>
            <person name="Zimmer A."/>
            <person name="Hide W."/>
            <person name="Bult C."/>
            <person name="Grimmond S.M."/>
            <person name="Teasdale R.D."/>
            <person name="Liu E.T."/>
            <person name="Brusic V."/>
            <person name="Quackenbush J."/>
            <person name="Wahlestedt C."/>
            <person name="Mattick J.S."/>
            <person name="Hume D.A."/>
            <person name="Kai C."/>
            <person name="Sasaki D."/>
            <person name="Tomaru Y."/>
            <person name="Fukuda S."/>
            <person name="Kanamori-Katayama M."/>
            <person name="Suzuki M."/>
            <person name="Aoki J."/>
            <person name="Arakawa T."/>
            <person name="Iida J."/>
            <person name="Imamura K."/>
            <person name="Itoh M."/>
            <person name="Kato T."/>
            <person name="Kawaji H."/>
            <person name="Kawagashira N."/>
            <person name="Kawashima T."/>
            <person name="Kojima M."/>
            <person name="Kondo S."/>
            <person name="Konno H."/>
            <person name="Nakano K."/>
            <person name="Ninomiya N."/>
            <person name="Nishio T."/>
            <person name="Okada M."/>
            <person name="Plessy C."/>
            <person name="Shibata K."/>
            <person name="Shiraki T."/>
            <person name="Suzuki S."/>
            <person name="Tagami M."/>
            <person name="Waki K."/>
            <person name="Watahiki A."/>
            <person name="Okamura-Oho Y."/>
            <person name="Suzuki H."/>
            <person name="Kawai J."/>
            <person name="Hayashizaki Y."/>
        </authorList>
    </citation>
    <scope>NUCLEOTIDE SEQUENCE [LARGE SCALE MRNA]</scope>
    <source>
        <strain>C57BL/6J</strain>
        <tissue>Cerebellum</tissue>
        <tissue>Embryo</tissue>
    </source>
</reference>
<reference key="2">
    <citation type="journal article" date="2004" name="Genome Res.">
        <title>The status, quality, and expansion of the NIH full-length cDNA project: the Mammalian Gene Collection (MGC).</title>
        <authorList>
            <consortium name="The MGC Project Team"/>
        </authorList>
    </citation>
    <scope>NUCLEOTIDE SEQUENCE [LARGE SCALE MRNA]</scope>
    <source>
        <strain>FVB/N</strain>
        <tissue>Mammary tumor</tissue>
    </source>
</reference>
<protein>
    <recommendedName>
        <fullName>Microfibril-associated glycoprotein 3</fullName>
    </recommendedName>
</protein>
<feature type="signal peptide" evidence="2">
    <location>
        <begin position="1"/>
        <end position="21"/>
    </location>
</feature>
<feature type="chain" id="PRO_0000014866" description="Microfibril-associated glycoprotein 3">
    <location>
        <begin position="22"/>
        <end position="349"/>
    </location>
</feature>
<feature type="topological domain" description="Extracellular" evidence="2">
    <location>
        <begin position="22"/>
        <end position="139"/>
    </location>
</feature>
<feature type="transmembrane region" description="Helical" evidence="2">
    <location>
        <begin position="140"/>
        <end position="160"/>
    </location>
</feature>
<feature type="topological domain" description="Cytoplasmic" evidence="2">
    <location>
        <begin position="161"/>
        <end position="349"/>
    </location>
</feature>
<feature type="domain" description="Ig-like C2-type">
    <location>
        <begin position="41"/>
        <end position="130"/>
    </location>
</feature>
<feature type="region of interest" description="Disordered" evidence="4">
    <location>
        <begin position="280"/>
        <end position="349"/>
    </location>
</feature>
<feature type="compositionally biased region" description="Polar residues" evidence="4">
    <location>
        <begin position="311"/>
        <end position="331"/>
    </location>
</feature>
<feature type="glycosylation site" description="N-linked (GlcNAc...) asparagine" evidence="2">
    <location>
        <position position="31"/>
    </location>
</feature>
<feature type="glycosylation site" description="N-linked (GlcNAc...) asparagine" evidence="2">
    <location>
        <position position="36"/>
    </location>
</feature>
<feature type="glycosylation site" description="N-linked (GlcNAc...) asparagine" evidence="2">
    <location>
        <position position="63"/>
    </location>
</feature>
<feature type="glycosylation site" description="N-linked (GlcNAc...) asparagine" evidence="2">
    <location>
        <position position="103"/>
    </location>
</feature>
<feature type="disulfide bond" evidence="3">
    <location>
        <begin position="68"/>
        <end position="117"/>
    </location>
</feature>
<feature type="sequence conflict" description="In Ref. 1; BAC31429/BAC36162." evidence="5" ref="1">
    <original>F</original>
    <variation>I</variation>
    <location>
        <position position="9"/>
    </location>
</feature>
<feature type="sequence conflict" description="In Ref. 1; BAC31429/BAC36162." evidence="5" ref="1">
    <original>S</original>
    <variation>G</variation>
    <location>
        <position position="21"/>
    </location>
</feature>
<comment type="function">
    <text evidence="1">Component of the elastin-associated microfibrils.</text>
</comment>
<comment type="subcellular location">
    <subcellularLocation>
        <location evidence="5">Cell membrane</location>
        <topology evidence="5">Single-pass type I membrane protein</topology>
    </subcellularLocation>
</comment>
<comment type="PTM">
    <text evidence="5">Glycosylated.</text>
</comment>
<keyword id="KW-1003">Cell membrane</keyword>
<keyword id="KW-1015">Disulfide bond</keyword>
<keyword id="KW-0325">Glycoprotein</keyword>
<keyword id="KW-0393">Immunoglobulin domain</keyword>
<keyword id="KW-0472">Membrane</keyword>
<keyword id="KW-1185">Reference proteome</keyword>
<keyword id="KW-0732">Signal</keyword>
<keyword id="KW-0812">Transmembrane</keyword>
<keyword id="KW-1133">Transmembrane helix</keyword>
<gene>
    <name type="primary">Mfap3</name>
</gene>